<keyword id="KW-1283">Bacterial microcompartment</keyword>
<keyword id="KW-0143">Chaperone</keyword>
<keyword id="KW-0378">Hydrolase</keyword>
<keyword id="KW-0460">Magnesium</keyword>
<keyword id="KW-0479">Metal-binding</keyword>
<keyword id="KW-1185">Reference proteome</keyword>
<name>PDUH_SALTY</name>
<dbReference type="EMBL" id="AF026270">
    <property type="protein sequence ID" value="AAD39008.1"/>
    <property type="molecule type" value="Genomic_DNA"/>
</dbReference>
<dbReference type="EMBL" id="AE006468">
    <property type="protein sequence ID" value="AAL20948.1"/>
    <property type="molecule type" value="Genomic_DNA"/>
</dbReference>
<dbReference type="RefSeq" id="NP_460989.1">
    <property type="nucleotide sequence ID" value="NC_003197.2"/>
</dbReference>
<dbReference type="RefSeq" id="WP_000377961.1">
    <property type="nucleotide sequence ID" value="NC_003197.2"/>
</dbReference>
<dbReference type="SMR" id="Q8ZNR6"/>
<dbReference type="STRING" id="99287.STM2044"/>
<dbReference type="PaxDb" id="99287-STM2044"/>
<dbReference type="GeneID" id="1253565"/>
<dbReference type="KEGG" id="stm:STM2044"/>
<dbReference type="PATRIC" id="fig|99287.12.peg.2166"/>
<dbReference type="HOGENOM" id="CLU_139758_2_0_6"/>
<dbReference type="OMA" id="FSAHRFC"/>
<dbReference type="PhylomeDB" id="Q8ZNR6"/>
<dbReference type="BioCyc" id="SENT99287:STM2044-MONOMER"/>
<dbReference type="UniPathway" id="UPA00621"/>
<dbReference type="Proteomes" id="UP000001014">
    <property type="component" value="Chromosome"/>
</dbReference>
<dbReference type="GO" id="GO:0031472">
    <property type="term" value="C:propanediol degradation polyhedral organelle"/>
    <property type="evidence" value="ECO:0000314"/>
    <property type="project" value="UniProtKB"/>
</dbReference>
<dbReference type="GO" id="GO:0016787">
    <property type="term" value="F:hydrolase activity"/>
    <property type="evidence" value="ECO:0007669"/>
    <property type="project" value="UniProtKB-KW"/>
</dbReference>
<dbReference type="GO" id="GO:0046872">
    <property type="term" value="F:metal ion binding"/>
    <property type="evidence" value="ECO:0007669"/>
    <property type="project" value="UniProtKB-KW"/>
</dbReference>
<dbReference type="GO" id="GO:0051144">
    <property type="term" value="P:propanediol catabolic process"/>
    <property type="evidence" value="ECO:0007669"/>
    <property type="project" value="UniProtKB-UniPathway"/>
</dbReference>
<dbReference type="Gene3D" id="3.40.50.10150">
    <property type="entry name" value="B12-dependent dehydatase associated subunit"/>
    <property type="match status" value="1"/>
</dbReference>
<dbReference type="InterPro" id="IPR010254">
    <property type="entry name" value="B12-dep_deHydtase_bsu"/>
</dbReference>
<dbReference type="InterPro" id="IPR003208">
    <property type="entry name" value="Dehydtase/Dehydtase_re"/>
</dbReference>
<dbReference type="InterPro" id="IPR009192">
    <property type="entry name" value="Diol/glycerol_deHydtase_re_ssu"/>
</dbReference>
<dbReference type="Pfam" id="PF02288">
    <property type="entry name" value="Dehydratase_MU"/>
    <property type="match status" value="1"/>
</dbReference>
<dbReference type="PIRSF" id="PIRSF011503">
    <property type="entry name" value="DdrB_PduH"/>
    <property type="match status" value="1"/>
</dbReference>
<dbReference type="SUPFAM" id="SSF52968">
    <property type="entry name" value="B12-dependent dehydatase associated subunit"/>
    <property type="match status" value="1"/>
</dbReference>
<organism>
    <name type="scientific">Salmonella typhimurium (strain LT2 / SGSC1412 / ATCC 700720)</name>
    <dbReference type="NCBI Taxonomy" id="99287"/>
    <lineage>
        <taxon>Bacteria</taxon>
        <taxon>Pseudomonadati</taxon>
        <taxon>Pseudomonadota</taxon>
        <taxon>Gammaproteobacteria</taxon>
        <taxon>Enterobacterales</taxon>
        <taxon>Enterobacteriaceae</taxon>
        <taxon>Salmonella</taxon>
    </lineage>
</organism>
<sequence length="116" mass="12656">MDSNHSAPAIVITVINDCASLWHEVLLGIEEEGIPFLLQHHPAGDIVDSAWQAARSSPLLVGIACDRHSLVVHYKNLPASAPLFTLMHHQDSQAQRNTGNNAARLVKGIPFRDLHA</sequence>
<evidence type="ECO:0000250" key="1">
    <source>
        <dbReference type="UniProtKB" id="O68196"/>
    </source>
</evidence>
<evidence type="ECO:0000269" key="2">
    <source>
    </source>
</evidence>
<evidence type="ECO:0000269" key="3">
    <source>
    </source>
</evidence>
<evidence type="ECO:0000303" key="4">
    <source>
    </source>
</evidence>
<evidence type="ECO:0000305" key="5"/>
<evidence type="ECO:0000305" key="6">
    <source>
    </source>
</evidence>
<evidence type="ECO:0000305" key="7">
    <source>
    </source>
</evidence>
<comment type="function">
    <text evidence="1">Small subunit of the propanediol dehydratase-reactivating factor (DDR), which reactivates suicidally inhibited adenosylcobalamin-dependent propanediol dehydratase (diol dehydratase, DDH) found in the bacterial microcompartment (BMC) dedicated to 1,2-propanediol (1,2-PD) degradation. Reactivates inactivated DDH in the presence of ATP, Mg(2+) and free adenosylcobalamin (AdoCbl), by mediating the exchange of the tightly bound damaged cofactor AdoCbl for a free intact one.</text>
</comment>
<comment type="function">
    <text evidence="7">The 1,2-PD-specific bacterial microcompartment (BMC) concentrates low levels of 1,2-PD catabolic enzymes, concentrates volatile reaction intermediates thus enhancing pathway flux and keeps the level of toxic, mutagenic propionaldehyde low.</text>
</comment>
<comment type="catalytic activity">
    <reaction evidence="1">
        <text>ATP + H2O = ADP + phosphate + H(+)</text>
        <dbReference type="Rhea" id="RHEA:13065"/>
        <dbReference type="ChEBI" id="CHEBI:15377"/>
        <dbReference type="ChEBI" id="CHEBI:15378"/>
        <dbReference type="ChEBI" id="CHEBI:30616"/>
        <dbReference type="ChEBI" id="CHEBI:43474"/>
        <dbReference type="ChEBI" id="CHEBI:456216"/>
    </reaction>
</comment>
<comment type="cofactor">
    <cofactor evidence="1">
        <name>Mg(2+)</name>
        <dbReference type="ChEBI" id="CHEBI:18420"/>
    </cofactor>
</comment>
<comment type="pathway">
    <text evidence="6">Polyol metabolism; 1,2-propanediol degradation.</text>
</comment>
<comment type="subunit">
    <text evidence="1">Forms a heterotetramer PduG(2)/PduH(2).</text>
</comment>
<comment type="subcellular location">
    <subcellularLocation>
        <location evidence="3">Bacterial microcompartment</location>
    </subcellularLocation>
</comment>
<comment type="induction">
    <text evidence="2">BMC production is induced by growth on 1,2-PD vitamin B12 medium.</text>
</comment>
<comment type="miscellaneous">
    <text evidence="2 3">Bacterial microcompartments (BMC) 100-200 nm in cross section are formed during aerobic growth on minimal 1,2-PD-B12 or anaerobic growth on 1,2-PD-tetrathionate medium, but not during aerobic growth on glucose, anerobic growth on glucose or pyruvate-tetrathionate (PubMed:10498708). BMCs can constitute up to 10% of total cell protein (PubMed:12923081).</text>
</comment>
<comment type="similarity">
    <text evidence="5">Belongs to the DdrB/PduH family.</text>
</comment>
<feature type="chain" id="PRO_0000454264" description="Propanediol dehydratase-reactivating factor small subunit">
    <location>
        <begin position="1"/>
        <end position="116"/>
    </location>
</feature>
<feature type="binding site" evidence="1">
    <location>
        <position position="31"/>
    </location>
    <ligand>
        <name>Mg(2+)</name>
        <dbReference type="ChEBI" id="CHEBI:18420"/>
    </ligand>
</feature>
<feature type="sequence conflict" description="In Ref. 1; AAD39008." evidence="5" ref="1">
    <original>RDLHA</original>
    <variation>GISMLNHRRTAV</variation>
    <location>
        <begin position="112"/>
        <end position="116"/>
    </location>
</feature>
<reference key="1">
    <citation type="journal article" date="1999" name="J. Bacteriol.">
        <title>The propanediol utilization (pdu) operon of Salmonella enterica serovar typhimurium LT2 includes genes necessary for formation of polyhedral organelles involved in coenzyme B(12)-dependent 1, 2-propanediol degradation.</title>
        <authorList>
            <person name="Bobik T.A."/>
            <person name="Havemann G.D."/>
            <person name="Busch R.J."/>
            <person name="Williams D.S."/>
            <person name="Aldrich H.C."/>
        </authorList>
    </citation>
    <scope>NUCLEOTIDE SEQUENCE [GENOMIC DNA]</scope>
    <scope>PATHWAY</scope>
    <scope>INDUCTION</scope>
    <source>
        <strain>LT2</strain>
    </source>
</reference>
<reference key="2">
    <citation type="journal article" date="2001" name="Nature">
        <title>Complete genome sequence of Salmonella enterica serovar Typhimurium LT2.</title>
        <authorList>
            <person name="McClelland M."/>
            <person name="Sanderson K.E."/>
            <person name="Spieth J."/>
            <person name="Clifton S.W."/>
            <person name="Latreille P."/>
            <person name="Courtney L."/>
            <person name="Porwollik S."/>
            <person name="Ali J."/>
            <person name="Dante M."/>
            <person name="Du F."/>
            <person name="Hou S."/>
            <person name="Layman D."/>
            <person name="Leonard S."/>
            <person name="Nguyen C."/>
            <person name="Scott K."/>
            <person name="Holmes A."/>
            <person name="Grewal N."/>
            <person name="Mulvaney E."/>
            <person name="Ryan E."/>
            <person name="Sun H."/>
            <person name="Florea L."/>
            <person name="Miller W."/>
            <person name="Stoneking T."/>
            <person name="Nhan M."/>
            <person name="Waterston R."/>
            <person name="Wilson R.K."/>
        </authorList>
    </citation>
    <scope>NUCLEOTIDE SEQUENCE [LARGE SCALE GENOMIC DNA]</scope>
    <source>
        <strain>LT2 / SGSC1412 / ATCC 700720</strain>
    </source>
</reference>
<reference key="3">
    <citation type="journal article" date="2003" name="J. Bacteriol.">
        <title>Protein content of polyhedral organelles involved in coenzyme B12-dependent degradation of 1,2-propanediol in Salmonella enterica serovar Typhimurium LT2.</title>
        <authorList>
            <person name="Havemann G.D."/>
            <person name="Bobik T.A."/>
        </authorList>
    </citation>
    <scope>IDENTIFICATION BY MASS SPECTROMETRY</scope>
    <scope>SUBCELLULAR LOCATION</scope>
    <source>
        <strain>LT2</strain>
    </source>
</reference>
<reference key="4">
    <citation type="journal article" date="2017" name="PLoS Comput. Biol.">
        <title>A systems-level model reveals that 1,2-Propanediol utilization microcompartments enhance pathway flux through intermediate sequestration.</title>
        <authorList>
            <person name="Jakobson C.M."/>
            <person name="Tullman-Ercek D."/>
            <person name="Slininger M.F."/>
            <person name="Mangan N.M."/>
        </authorList>
    </citation>
    <scope>SYSTEM-MODELING</scope>
    <scope>FUNCTION</scope>
    <source>
        <strain>LT2</strain>
    </source>
</reference>
<gene>
    <name evidence="4" type="primary">pduH</name>
    <name type="ordered locus">STM2044</name>
</gene>
<accession>Q8ZNR6</accession>
<accession>Q9XDN8</accession>
<proteinExistence type="evidence at protein level"/>
<protein>
    <recommendedName>
        <fullName evidence="1">Propanediol dehydratase-reactivating factor small subunit</fullName>
        <shortName>DDR small subunit</shortName>
    </recommendedName>
    <alternativeName>
        <fullName>Propanediol utilization protein PduH</fullName>
    </alternativeName>
</protein>